<comment type="function">
    <text evidence="1">Provides the (R)-glutamate required for cell wall biosynthesis.</text>
</comment>
<comment type="catalytic activity">
    <reaction evidence="1">
        <text>L-glutamate = D-glutamate</text>
        <dbReference type="Rhea" id="RHEA:12813"/>
        <dbReference type="ChEBI" id="CHEBI:29985"/>
        <dbReference type="ChEBI" id="CHEBI:29986"/>
        <dbReference type="EC" id="5.1.1.3"/>
    </reaction>
</comment>
<comment type="pathway">
    <text evidence="1">Cell wall biogenesis; peptidoglycan biosynthesis.</text>
</comment>
<comment type="similarity">
    <text evidence="1">Belongs to the aspartate/glutamate racemases family.</text>
</comment>
<gene>
    <name evidence="1" type="primary">murI</name>
    <name type="ordered locus">ECA4237</name>
</gene>
<proteinExistence type="inferred from homology"/>
<reference key="1">
    <citation type="journal article" date="2004" name="Proc. Natl. Acad. Sci. U.S.A.">
        <title>Genome sequence of the enterobacterial phytopathogen Erwinia carotovora subsp. atroseptica and characterization of virulence factors.</title>
        <authorList>
            <person name="Bell K.S."/>
            <person name="Sebaihia M."/>
            <person name="Pritchard L."/>
            <person name="Holden M.T.G."/>
            <person name="Hyman L.J."/>
            <person name="Holeva M.C."/>
            <person name="Thomson N.R."/>
            <person name="Bentley S.D."/>
            <person name="Churcher L.J.C."/>
            <person name="Mungall K."/>
            <person name="Atkin R."/>
            <person name="Bason N."/>
            <person name="Brooks K."/>
            <person name="Chillingworth T."/>
            <person name="Clark K."/>
            <person name="Doggett J."/>
            <person name="Fraser A."/>
            <person name="Hance Z."/>
            <person name="Hauser H."/>
            <person name="Jagels K."/>
            <person name="Moule S."/>
            <person name="Norbertczak H."/>
            <person name="Ormond D."/>
            <person name="Price C."/>
            <person name="Quail M.A."/>
            <person name="Sanders M."/>
            <person name="Walker D."/>
            <person name="Whitehead S."/>
            <person name="Salmond G.P.C."/>
            <person name="Birch P.R.J."/>
            <person name="Parkhill J."/>
            <person name="Toth I.K."/>
        </authorList>
    </citation>
    <scope>NUCLEOTIDE SEQUENCE [LARGE SCALE GENOMIC DNA]</scope>
    <source>
        <strain>SCRI 1043 / ATCC BAA-672</strain>
    </source>
</reference>
<organism>
    <name type="scientific">Pectobacterium atrosepticum (strain SCRI 1043 / ATCC BAA-672)</name>
    <name type="common">Erwinia carotovora subsp. atroseptica</name>
    <dbReference type="NCBI Taxonomy" id="218491"/>
    <lineage>
        <taxon>Bacteria</taxon>
        <taxon>Pseudomonadati</taxon>
        <taxon>Pseudomonadota</taxon>
        <taxon>Gammaproteobacteria</taxon>
        <taxon>Enterobacterales</taxon>
        <taxon>Pectobacteriaceae</taxon>
        <taxon>Pectobacterium</taxon>
    </lineage>
</organism>
<protein>
    <recommendedName>
        <fullName evidence="1">Glutamate racemase</fullName>
        <ecNumber evidence="1">5.1.1.3</ecNumber>
    </recommendedName>
</protein>
<keyword id="KW-0133">Cell shape</keyword>
<keyword id="KW-0961">Cell wall biogenesis/degradation</keyword>
<keyword id="KW-0413">Isomerase</keyword>
<keyword id="KW-0573">Peptidoglycan synthesis</keyword>
<keyword id="KW-1185">Reference proteome</keyword>
<evidence type="ECO:0000255" key="1">
    <source>
        <dbReference type="HAMAP-Rule" id="MF_00258"/>
    </source>
</evidence>
<sequence length="285" mass="31405">MATARQGENTISLEAIPSNLPSRPTILVFDSGVGGLSVYDEIRQLLPDLHYIYAFDNEAFPYGEKSQQFIIERVVEIVSAVQQRHQLALVVIACNTASTISLPALRERFTFPVVGVVPAVKPAAKLTRNGVVGLLATRATVQRPYTHELITRFATDCQILSLGSSELVELAEAKLQGEAISISELQKILRPWLRLTEPPDTVVLGCTHFPLLAEELKMVLPEGTRLVDSGAAIAKRTAWLIANLDNPPLSTDRNLVYCLKITPKVATLWPILQRYGFNSLEKLPL</sequence>
<accession>Q6CZB6</accession>
<dbReference type="EC" id="5.1.1.3" evidence="1"/>
<dbReference type="EMBL" id="BX950851">
    <property type="protein sequence ID" value="CAG77134.1"/>
    <property type="molecule type" value="Genomic_DNA"/>
</dbReference>
<dbReference type="RefSeq" id="WP_011095708.1">
    <property type="nucleotide sequence ID" value="NC_004547.2"/>
</dbReference>
<dbReference type="SMR" id="Q6CZB6"/>
<dbReference type="STRING" id="218491.ECA4237"/>
<dbReference type="GeneID" id="57210909"/>
<dbReference type="KEGG" id="eca:ECA4237"/>
<dbReference type="PATRIC" id="fig|218491.5.peg.4314"/>
<dbReference type="eggNOG" id="COG0796">
    <property type="taxonomic scope" value="Bacteria"/>
</dbReference>
<dbReference type="HOGENOM" id="CLU_052344_2_0_6"/>
<dbReference type="OrthoDB" id="9801055at2"/>
<dbReference type="UniPathway" id="UPA00219"/>
<dbReference type="Proteomes" id="UP000007966">
    <property type="component" value="Chromosome"/>
</dbReference>
<dbReference type="GO" id="GO:0008881">
    <property type="term" value="F:glutamate racemase activity"/>
    <property type="evidence" value="ECO:0007669"/>
    <property type="project" value="UniProtKB-UniRule"/>
</dbReference>
<dbReference type="GO" id="GO:0071555">
    <property type="term" value="P:cell wall organization"/>
    <property type="evidence" value="ECO:0007669"/>
    <property type="project" value="UniProtKB-KW"/>
</dbReference>
<dbReference type="GO" id="GO:0009252">
    <property type="term" value="P:peptidoglycan biosynthetic process"/>
    <property type="evidence" value="ECO:0007669"/>
    <property type="project" value="UniProtKB-UniRule"/>
</dbReference>
<dbReference type="GO" id="GO:0008360">
    <property type="term" value="P:regulation of cell shape"/>
    <property type="evidence" value="ECO:0007669"/>
    <property type="project" value="UniProtKB-KW"/>
</dbReference>
<dbReference type="FunFam" id="3.40.50.1860:FF:000002">
    <property type="entry name" value="Glutamate racemase"/>
    <property type="match status" value="1"/>
</dbReference>
<dbReference type="Gene3D" id="3.40.50.1860">
    <property type="match status" value="2"/>
</dbReference>
<dbReference type="HAMAP" id="MF_00258">
    <property type="entry name" value="Glu_racemase"/>
    <property type="match status" value="1"/>
</dbReference>
<dbReference type="InterPro" id="IPR015942">
    <property type="entry name" value="Asp/Glu/hydantoin_racemase"/>
</dbReference>
<dbReference type="InterPro" id="IPR001920">
    <property type="entry name" value="Asp/Glu_race"/>
</dbReference>
<dbReference type="InterPro" id="IPR018187">
    <property type="entry name" value="Asp/Glu_racemase_AS_1"/>
</dbReference>
<dbReference type="InterPro" id="IPR033134">
    <property type="entry name" value="Asp/Glu_racemase_AS_2"/>
</dbReference>
<dbReference type="InterPro" id="IPR004391">
    <property type="entry name" value="Glu_race"/>
</dbReference>
<dbReference type="NCBIfam" id="TIGR00067">
    <property type="entry name" value="glut_race"/>
    <property type="match status" value="1"/>
</dbReference>
<dbReference type="NCBIfam" id="NF002034">
    <property type="entry name" value="PRK00865.1-1"/>
    <property type="match status" value="1"/>
</dbReference>
<dbReference type="PANTHER" id="PTHR21198">
    <property type="entry name" value="GLUTAMATE RACEMASE"/>
    <property type="match status" value="1"/>
</dbReference>
<dbReference type="PANTHER" id="PTHR21198:SF2">
    <property type="entry name" value="GLUTAMATE RACEMASE"/>
    <property type="match status" value="1"/>
</dbReference>
<dbReference type="Pfam" id="PF01177">
    <property type="entry name" value="Asp_Glu_race"/>
    <property type="match status" value="1"/>
</dbReference>
<dbReference type="SUPFAM" id="SSF53681">
    <property type="entry name" value="Aspartate/glutamate racemase"/>
    <property type="match status" value="2"/>
</dbReference>
<dbReference type="PROSITE" id="PS00923">
    <property type="entry name" value="ASP_GLU_RACEMASE_1"/>
    <property type="match status" value="1"/>
</dbReference>
<dbReference type="PROSITE" id="PS00924">
    <property type="entry name" value="ASP_GLU_RACEMASE_2"/>
    <property type="match status" value="1"/>
</dbReference>
<feature type="chain" id="PRO_1000047565" description="Glutamate racemase">
    <location>
        <begin position="1"/>
        <end position="285"/>
    </location>
</feature>
<feature type="active site" description="Proton donor/acceptor" evidence="1">
    <location>
        <position position="94"/>
    </location>
</feature>
<feature type="active site" description="Proton donor/acceptor" evidence="1">
    <location>
        <position position="206"/>
    </location>
</feature>
<feature type="binding site" evidence="1">
    <location>
        <begin position="30"/>
        <end position="31"/>
    </location>
    <ligand>
        <name>substrate</name>
    </ligand>
</feature>
<feature type="binding site" evidence="1">
    <location>
        <begin position="62"/>
        <end position="63"/>
    </location>
    <ligand>
        <name>substrate</name>
    </ligand>
</feature>
<feature type="binding site" evidence="1">
    <location>
        <begin position="95"/>
        <end position="96"/>
    </location>
    <ligand>
        <name>substrate</name>
    </ligand>
</feature>
<feature type="binding site" evidence="1">
    <location>
        <begin position="207"/>
        <end position="208"/>
    </location>
    <ligand>
        <name>substrate</name>
    </ligand>
</feature>
<name>MURI_PECAS</name>